<comment type="function">
    <text evidence="3 4 5 6 7 9">Carbohydrate-binding lectin with a preference for chitin. Has no chitinase activity. May play a role in tissue remodeling and in the capacity of cells to respond to and cope with changes in their environment. Plays a role in T-helper cell type 2 (Th2) inflammatory response and IL-13-induced inflammation, regulating allergen sensitization, inflammatory cell apoptosis, dendritic cell accumulation and M2 macrophage differentiation. Facilitates invasion of pathogenic enteric bacteria into colonic mucosa and lymphoid organs. Mediates activation of AKT1 signaling pathway and subsequent IL8 production in colonic epithelial cells. Regulates antibacterial responses in lung by contributing to macrophage bacterial killing, controlling bacterial dissemination and augmenting host tolerance. Also regulates hyperoxia-induced injury, inflammation and epithelial apoptosis in lung.</text>
</comment>
<comment type="subunit">
    <text evidence="1">Monomer.</text>
</comment>
<comment type="interaction">
    <interactant intactId="EBI-8392424">
        <id>Q61362</id>
    </interactant>
    <interactant intactId="EBI-20260800">
        <id>O88786</id>
        <label>Il13ra2</label>
    </interactant>
    <organismsDiffer>false</organismsDiffer>
    <experiments>12</experiments>
</comment>
<comment type="interaction">
    <interactant intactId="EBI-8392424">
        <id>Q61362</id>
    </interactant>
    <interactant intactId="EBI-3508325">
        <id>P16110</id>
        <label>Lgals3</label>
    </interactant>
    <organismsDiffer>false</organismsDiffer>
    <experiments>4</experiments>
</comment>
<comment type="subcellular location">
    <subcellularLocation>
        <location>Secreted</location>
        <location>Extracellular space</location>
    </subcellularLocation>
    <subcellularLocation>
        <location>Cytoplasm</location>
    </subcellularLocation>
    <subcellularLocation>
        <location>Endoplasmic reticulum</location>
    </subcellularLocation>
    <text>Detected in bronchoalveolar lavage (BAL) fluids. Localizes mainly to endoplasmic reticulum when overexpressed in cells, with some protein also detected throughout the cytoplasm.</text>
</comment>
<comment type="alternative products">
    <event type="alternative splicing"/>
    <event type="alternative initiation"/>
    <isoform>
        <id>Q61362-1</id>
        <name>1</name>
        <sequence type="displayed"/>
    </isoform>
    <isoform>
        <id>Q61362-2</id>
        <name>2</name>
        <sequence type="described" ref="VSP_054524"/>
    </isoform>
    <isoform>
        <id>Q61362-3</id>
        <name>3</name>
        <sequence type="described" ref="VSP_054523"/>
    </isoform>
</comment>
<comment type="tissue specificity">
    <text evidence="3 5 6 8">Detected in lung in pulmonary macrophages and alveolar type 2 cells and in bronchoalveolar lavage (BAL) fluids. Expressed in mammary tumor cells (at protein level). Expressed in lung. Not detected in non-inflammatory colon.</text>
</comment>
<comment type="induction">
    <text evidence="3 5 6 8 9">Up-regulated in colon under several inflammatory conditions. Up-regulated upon pulmonary inflammation elicited by sensitization and challenge with the chitin-free aeroallergen ovalbumin or with chitin-containing antigen house dust mite (HDM) extract. Up-regulated in lungs after S.pneumoniae infection. Up-regulated in splenic cells of mammary tumor-bearing animals. Down-regulated by hyperoxia in lung.</text>
</comment>
<comment type="disruption phenotype">
    <text evidence="5 6 9">Mice are viable, fertile and appear normal, but have defective antigen-induced Th2 inflammatory responses and defective IL-13-induced responses, displaying accelerated cell death responses and diminished M2 macrophage differentiation. Mutant mice are more sensitive to S.pneumoniae infection, displaying enhanced mortality, exacerbated lung injury and decreased bacterial clearance compared to wild-type mice. Mutant mice also have an exacerbated response to hyperoxia, displaying enhanced protein leak, tissue inflammation and chemokine production and premature death.</text>
</comment>
<comment type="miscellaneous">
    <molecule>Isoform 2</molecule>
    <text evidence="12">Produced by alternative initiation at Met-9 of isoform 1.</text>
</comment>
<comment type="miscellaneous">
    <molecule>Isoform 3</molecule>
    <text evidence="12">May be produced by alternative splicing of isoform 1.</text>
</comment>
<comment type="similarity">
    <text evidence="12">Belongs to the glycosyl hydrolase 18 family.</text>
</comment>
<comment type="caution">
    <text evidence="12">Although it belongs to the glycosyl hydrolase 18 family, Leu-149 is present instead of the conserved Glu which is an active site residue. Therefore this protein lacks chitinase activity.</text>
</comment>
<comment type="sequence caution" evidence="12">
    <conflict type="erroneous initiation">
        <sequence resource="EMBL-CDS" id="AAH03780"/>
    </conflict>
    <text>Truncated N-terminus.</text>
</comment>
<comment type="sequence caution" evidence="12">
    <conflict type="erroneous initiation">
        <sequence resource="EMBL-CDS" id="AAH04734"/>
    </conflict>
    <text>Truncated N-terminus.</text>
</comment>
<comment type="sequence caution" evidence="12">
    <conflict type="erroneous initiation">
        <sequence resource="EMBL-CDS" id="AAH05611"/>
    </conflict>
    <text>Truncated N-terminus.</text>
</comment>
<comment type="sequence caution" evidence="12">
    <conflict type="erroneous initiation">
        <sequence resource="EMBL-CDS" id="CAA63603"/>
    </conflict>
    <text>Truncated N-terminus.</text>
</comment>
<gene>
    <name type="primary">Chi3l1</name>
    <name type="synonym">Brp39</name>
    <name type="synonym">Chil1</name>
</gene>
<reference key="1">
    <citation type="journal article" date="1994" name="Oncogene">
        <title>neu and ras initiate murine mammary tumors that share genetic markers generally absent in c-myc and int-2-initiated tumors.</title>
        <authorList>
            <person name="Morrison B.W."/>
            <person name="Leder P."/>
        </authorList>
    </citation>
    <scope>NUCLEOTIDE SEQUENCE [MRNA] (ISOFORM 1)</scope>
    <source>
        <strain>FVB/N</strain>
        <tissue>Mammary gland</tissue>
    </source>
</reference>
<reference key="2">
    <citation type="journal article" date="2009" name="Protein Expr. Purif.">
        <title>Cloning, expression, characterization and crystallization of BRP39, a signalling glycoprotein expressed during mammary gland apoptosis.</title>
        <authorList>
            <person name="Mohanty A.K."/>
            <person name="Fisher A.J."/>
            <person name="Yu Z."/>
            <person name="Pradeep M.A."/>
            <person name="Janjanam J."/>
            <person name="Kaushik J.K."/>
        </authorList>
    </citation>
    <scope>NUCLEOTIDE SEQUENCE [MRNA] (ISOFORM 2)</scope>
    <scope>FUNCTION</scope>
    <scope>MUTAGENESIS OF LEU-136</scope>
    <scope>CRYSTALLIZATION</scope>
    <source>
        <tissue>Mammary gland</tissue>
    </source>
</reference>
<reference key="3">
    <citation type="journal article" date="2005" name="Science">
        <title>The transcriptional landscape of the mammalian genome.</title>
        <authorList>
            <person name="Carninci P."/>
            <person name="Kasukawa T."/>
            <person name="Katayama S."/>
            <person name="Gough J."/>
            <person name="Frith M.C."/>
            <person name="Maeda N."/>
            <person name="Oyama R."/>
            <person name="Ravasi T."/>
            <person name="Lenhard B."/>
            <person name="Wells C."/>
            <person name="Kodzius R."/>
            <person name="Shimokawa K."/>
            <person name="Bajic V.B."/>
            <person name="Brenner S.E."/>
            <person name="Batalov S."/>
            <person name="Forrest A.R."/>
            <person name="Zavolan M."/>
            <person name="Davis M.J."/>
            <person name="Wilming L.G."/>
            <person name="Aidinis V."/>
            <person name="Allen J.E."/>
            <person name="Ambesi-Impiombato A."/>
            <person name="Apweiler R."/>
            <person name="Aturaliya R.N."/>
            <person name="Bailey T.L."/>
            <person name="Bansal M."/>
            <person name="Baxter L."/>
            <person name="Beisel K.W."/>
            <person name="Bersano T."/>
            <person name="Bono H."/>
            <person name="Chalk A.M."/>
            <person name="Chiu K.P."/>
            <person name="Choudhary V."/>
            <person name="Christoffels A."/>
            <person name="Clutterbuck D.R."/>
            <person name="Crowe M.L."/>
            <person name="Dalla E."/>
            <person name="Dalrymple B.P."/>
            <person name="de Bono B."/>
            <person name="Della Gatta G."/>
            <person name="di Bernardo D."/>
            <person name="Down T."/>
            <person name="Engstrom P."/>
            <person name="Fagiolini M."/>
            <person name="Faulkner G."/>
            <person name="Fletcher C.F."/>
            <person name="Fukushima T."/>
            <person name="Furuno M."/>
            <person name="Futaki S."/>
            <person name="Gariboldi M."/>
            <person name="Georgii-Hemming P."/>
            <person name="Gingeras T.R."/>
            <person name="Gojobori T."/>
            <person name="Green R.E."/>
            <person name="Gustincich S."/>
            <person name="Harbers M."/>
            <person name="Hayashi Y."/>
            <person name="Hensch T.K."/>
            <person name="Hirokawa N."/>
            <person name="Hill D."/>
            <person name="Huminiecki L."/>
            <person name="Iacono M."/>
            <person name="Ikeo K."/>
            <person name="Iwama A."/>
            <person name="Ishikawa T."/>
            <person name="Jakt M."/>
            <person name="Kanapin A."/>
            <person name="Katoh M."/>
            <person name="Kawasawa Y."/>
            <person name="Kelso J."/>
            <person name="Kitamura H."/>
            <person name="Kitano H."/>
            <person name="Kollias G."/>
            <person name="Krishnan S.P."/>
            <person name="Kruger A."/>
            <person name="Kummerfeld S.K."/>
            <person name="Kurochkin I.V."/>
            <person name="Lareau L.F."/>
            <person name="Lazarevic D."/>
            <person name="Lipovich L."/>
            <person name="Liu J."/>
            <person name="Liuni S."/>
            <person name="McWilliam S."/>
            <person name="Madan Babu M."/>
            <person name="Madera M."/>
            <person name="Marchionni L."/>
            <person name="Matsuda H."/>
            <person name="Matsuzawa S."/>
            <person name="Miki H."/>
            <person name="Mignone F."/>
            <person name="Miyake S."/>
            <person name="Morris K."/>
            <person name="Mottagui-Tabar S."/>
            <person name="Mulder N."/>
            <person name="Nakano N."/>
            <person name="Nakauchi H."/>
            <person name="Ng P."/>
            <person name="Nilsson R."/>
            <person name="Nishiguchi S."/>
            <person name="Nishikawa S."/>
            <person name="Nori F."/>
            <person name="Ohara O."/>
            <person name="Okazaki Y."/>
            <person name="Orlando V."/>
            <person name="Pang K.C."/>
            <person name="Pavan W.J."/>
            <person name="Pavesi G."/>
            <person name="Pesole G."/>
            <person name="Petrovsky N."/>
            <person name="Piazza S."/>
            <person name="Reed J."/>
            <person name="Reid J.F."/>
            <person name="Ring B.Z."/>
            <person name="Ringwald M."/>
            <person name="Rost B."/>
            <person name="Ruan Y."/>
            <person name="Salzberg S.L."/>
            <person name="Sandelin A."/>
            <person name="Schneider C."/>
            <person name="Schoenbach C."/>
            <person name="Sekiguchi K."/>
            <person name="Semple C.A."/>
            <person name="Seno S."/>
            <person name="Sessa L."/>
            <person name="Sheng Y."/>
            <person name="Shibata Y."/>
            <person name="Shimada H."/>
            <person name="Shimada K."/>
            <person name="Silva D."/>
            <person name="Sinclair B."/>
            <person name="Sperling S."/>
            <person name="Stupka E."/>
            <person name="Sugiura K."/>
            <person name="Sultana R."/>
            <person name="Takenaka Y."/>
            <person name="Taki K."/>
            <person name="Tammoja K."/>
            <person name="Tan S.L."/>
            <person name="Tang S."/>
            <person name="Taylor M.S."/>
            <person name="Tegner J."/>
            <person name="Teichmann S.A."/>
            <person name="Ueda H.R."/>
            <person name="van Nimwegen E."/>
            <person name="Verardo R."/>
            <person name="Wei C.L."/>
            <person name="Yagi K."/>
            <person name="Yamanishi H."/>
            <person name="Zabarovsky E."/>
            <person name="Zhu S."/>
            <person name="Zimmer A."/>
            <person name="Hide W."/>
            <person name="Bult C."/>
            <person name="Grimmond S.M."/>
            <person name="Teasdale R.D."/>
            <person name="Liu E.T."/>
            <person name="Brusic V."/>
            <person name="Quackenbush J."/>
            <person name="Wahlestedt C."/>
            <person name="Mattick J.S."/>
            <person name="Hume D.A."/>
            <person name="Kai C."/>
            <person name="Sasaki D."/>
            <person name="Tomaru Y."/>
            <person name="Fukuda S."/>
            <person name="Kanamori-Katayama M."/>
            <person name="Suzuki M."/>
            <person name="Aoki J."/>
            <person name="Arakawa T."/>
            <person name="Iida J."/>
            <person name="Imamura K."/>
            <person name="Itoh M."/>
            <person name="Kato T."/>
            <person name="Kawaji H."/>
            <person name="Kawagashira N."/>
            <person name="Kawashima T."/>
            <person name="Kojima M."/>
            <person name="Kondo S."/>
            <person name="Konno H."/>
            <person name="Nakano K."/>
            <person name="Ninomiya N."/>
            <person name="Nishio T."/>
            <person name="Okada M."/>
            <person name="Plessy C."/>
            <person name="Shibata K."/>
            <person name="Shiraki T."/>
            <person name="Suzuki S."/>
            <person name="Tagami M."/>
            <person name="Waki K."/>
            <person name="Watahiki A."/>
            <person name="Okamura-Oho Y."/>
            <person name="Suzuki H."/>
            <person name="Kawai J."/>
            <person name="Hayashizaki Y."/>
        </authorList>
    </citation>
    <scope>NUCLEOTIDE SEQUENCE [LARGE SCALE MRNA] (ISOFORM 1)</scope>
    <source>
        <strain>C57BL/6J</strain>
        <strain>NOD</strain>
        <tissue>Dendritic cell</tissue>
        <tissue>Spinal ganglion</tissue>
    </source>
</reference>
<reference key="4">
    <citation type="submission" date="2005-07" db="EMBL/GenBank/DDBJ databases">
        <title>Cloning of mouse full open reading frames in Gateway(R) system entry vector (pDONR201).</title>
        <authorList>
            <person name="Ebert L."/>
            <person name="Muenstermann E."/>
            <person name="Schatten R."/>
            <person name="Henze S."/>
            <person name="Bohn E."/>
            <person name="Mollenhauer J."/>
            <person name="Wiemann S."/>
            <person name="Schick M."/>
            <person name="Korn B."/>
        </authorList>
    </citation>
    <scope>NUCLEOTIDE SEQUENCE [LARGE SCALE MRNA] (ISOFORM 2)</scope>
</reference>
<reference key="5">
    <citation type="journal article" date="2009" name="PLoS Biol.">
        <title>Lineage-specific biology revealed by a finished genome assembly of the mouse.</title>
        <authorList>
            <person name="Church D.M."/>
            <person name="Goodstadt L."/>
            <person name="Hillier L.W."/>
            <person name="Zody M.C."/>
            <person name="Goldstein S."/>
            <person name="She X."/>
            <person name="Bult C.J."/>
            <person name="Agarwala R."/>
            <person name="Cherry J.L."/>
            <person name="DiCuccio M."/>
            <person name="Hlavina W."/>
            <person name="Kapustin Y."/>
            <person name="Meric P."/>
            <person name="Maglott D."/>
            <person name="Birtle Z."/>
            <person name="Marques A.C."/>
            <person name="Graves T."/>
            <person name="Zhou S."/>
            <person name="Teague B."/>
            <person name="Potamousis K."/>
            <person name="Churas C."/>
            <person name="Place M."/>
            <person name="Herschleb J."/>
            <person name="Runnheim R."/>
            <person name="Forrest D."/>
            <person name="Amos-Landgraf J."/>
            <person name="Schwartz D.C."/>
            <person name="Cheng Z."/>
            <person name="Lindblad-Toh K."/>
            <person name="Eichler E.E."/>
            <person name="Ponting C.P."/>
        </authorList>
    </citation>
    <scope>NUCLEOTIDE SEQUENCE [LARGE SCALE GENOMIC DNA]</scope>
    <source>
        <strain>C57BL/6J</strain>
    </source>
</reference>
<reference key="6">
    <citation type="journal article" date="2004" name="Genome Res.">
        <title>The status, quality, and expansion of the NIH full-length cDNA project: the Mammalian Gene Collection (MGC).</title>
        <authorList>
            <consortium name="The MGC Project Team"/>
        </authorList>
    </citation>
    <scope>NUCLEOTIDE SEQUENCE [LARGE SCALE MRNA] (ISOFORM 1)</scope>
    <source>
        <strain>FVB/N</strain>
        <tissue>Mammary tumor</tissue>
    </source>
</reference>
<reference key="7">
    <citation type="journal article" date="2006" name="Gastroenterology">
        <title>Chitinase 3-like-1 exacerbates intestinal inflammation by enhancing bacterial adhesion and invasion in colonic epithelial cells.</title>
        <authorList>
            <person name="Mizoguchi E."/>
        </authorList>
    </citation>
    <scope>FUNCTION</scope>
    <scope>TISSUE SPECIFICITY</scope>
    <scope>INDUCTION</scope>
</reference>
<reference key="8">
    <citation type="journal article" date="2009" name="J. Exp. Med.">
        <title>Role of breast regression protein 39 (BRP-39)/chitinase 3-like-1 in Th2 and IL-13-induced tissue responses and apoptosis.</title>
        <authorList>
            <person name="Lee C.G."/>
            <person name="Hartl D."/>
            <person name="Lee G.R."/>
            <person name="Koller B."/>
            <person name="Matsuura H."/>
            <person name="Da Silva C.A."/>
            <person name="Sohn M.H."/>
            <person name="Cohn L."/>
            <person name="Homer R.J."/>
            <person name="Kozhich A.A."/>
            <person name="Humbles A."/>
            <person name="Kearley J."/>
            <person name="Coyle A."/>
            <person name="Chupp G."/>
            <person name="Reed J."/>
            <person name="Flavell R.A."/>
            <person name="Elias J.A."/>
        </authorList>
    </citation>
    <scope>FUNCTION</scope>
    <scope>TISSUE SPECIFICITY</scope>
    <scope>INDUCTION</scope>
    <scope>DISRUPTION PHENOTYPE</scope>
</reference>
<reference key="9">
    <citation type="journal article" date="2010" name="Am. J. Respir. Crit. Care Med.">
        <title>The chitinase-like proteins breast regression protein-39 and YKL-40 regulate hyperoxia-induced acute lung injury.</title>
        <authorList>
            <person name="Sohn M.H."/>
            <person name="Kang M.J."/>
            <person name="Matsuura H."/>
            <person name="Bhandari V."/>
            <person name="Chen N.Y."/>
            <person name="Lee C.G."/>
            <person name="Elias J.A."/>
        </authorList>
    </citation>
    <scope>FUNCTION</scope>
    <scope>SUBCELLULAR LOCATION</scope>
    <scope>TISSUE SPECIFICITY</scope>
    <scope>INDUCTION</scope>
    <scope>DISRUPTION PHENOTYPE</scope>
</reference>
<reference key="10">
    <citation type="journal article" date="2010" name="Cell">
        <title>A tissue-specific atlas of mouse protein phosphorylation and expression.</title>
        <authorList>
            <person name="Huttlin E.L."/>
            <person name="Jedrychowski M.P."/>
            <person name="Elias J.E."/>
            <person name="Goswami T."/>
            <person name="Rad R."/>
            <person name="Beausoleil S.A."/>
            <person name="Villen J."/>
            <person name="Haas W."/>
            <person name="Sowa M.E."/>
            <person name="Gygi S.P."/>
        </authorList>
    </citation>
    <scope>IDENTIFICATION BY MASS SPECTROMETRY [LARGE SCALE ANALYSIS]</scope>
    <source>
        <tissue>Lung</tissue>
        <tissue>Spleen</tissue>
    </source>
</reference>
<reference key="11">
    <citation type="journal article" date="2011" name="Clin. Immunol.">
        <title>Carbohydrate-binding motif in chitinase 3-like 1 (CHI3L1/YKL-40) specifically activates Akt signaling pathway in colonic epithelial cells.</title>
        <authorList>
            <person name="Chen C.C."/>
            <person name="Llado V."/>
            <person name="Eurich K."/>
            <person name="Tran H.T."/>
            <person name="Mizoguchi E."/>
        </authorList>
    </citation>
    <scope>FUNCTION</scope>
    <scope>SUBCELLULAR LOCATION</scope>
    <scope>REGION</scope>
</reference>
<reference key="12">
    <citation type="journal article" date="2012" name="Cell Host Microbe">
        <title>Chitinase 3-like-1 promotes Streptococcus pneumoniae killing and augments host tolerance to lung antibacterial responses.</title>
        <authorList>
            <person name="Dela Cruz C.S."/>
            <person name="Liu W."/>
            <person name="He C.H."/>
            <person name="Jacoby A."/>
            <person name="Gornitzky A."/>
            <person name="Ma B."/>
            <person name="Flavell R."/>
            <person name="Lee C.G."/>
            <person name="Elias J.A."/>
        </authorList>
    </citation>
    <scope>FUNCTION</scope>
    <scope>INDUCTION</scope>
    <scope>DISRUPTION PHENOTYPE</scope>
</reference>
<reference key="13">
    <citation type="journal article" date="2012" name="Int. J. Cancer">
        <title>Induction of proinflammatory mediators by CHI3L1 is reduced by chitin treatment: decreased tumor metastasis in a breast cancer model.</title>
        <authorList>
            <person name="Libreros S."/>
            <person name="Garcia-Areas R."/>
            <person name="Shibata Y."/>
            <person name="Carrio R."/>
            <person name="Torroella-Kouri M."/>
            <person name="Iragavarapu-Charyulu V."/>
        </authorList>
    </citation>
    <scope>TISSUE SPECIFICITY</scope>
    <scope>INDUCTION</scope>
</reference>
<proteinExistence type="evidence at protein level"/>
<keyword id="KW-0002">3D-structure</keyword>
<keyword id="KW-0024">Alternative initiation</keyword>
<keyword id="KW-0025">Alternative splicing</keyword>
<keyword id="KW-0929">Antimicrobial</keyword>
<keyword id="KW-0053">Apoptosis</keyword>
<keyword id="KW-0963">Cytoplasm</keyword>
<keyword id="KW-1015">Disulfide bond</keyword>
<keyword id="KW-0256">Endoplasmic reticulum</keyword>
<keyword id="KW-0325">Glycoprotein</keyword>
<keyword id="KW-0395">Inflammatory response</keyword>
<keyword id="KW-1185">Reference proteome</keyword>
<keyword id="KW-0964">Secreted</keyword>
<keyword id="KW-0732">Signal</keyword>
<feature type="signal peptide" evidence="1">
    <location>
        <begin position="1"/>
        <end position="29"/>
    </location>
</feature>
<feature type="chain" id="PRO_0000011966" description="Chitinase-3-like protein 1">
    <location>
        <begin position="30"/>
        <end position="389"/>
    </location>
</feature>
<feature type="domain" description="GH18" evidence="2">
    <location>
        <begin position="30"/>
        <end position="389"/>
    </location>
</feature>
<feature type="region of interest" description="Important for AKT1 activation and IL8 production">
    <location>
        <begin position="333"/>
        <end position="347"/>
    </location>
</feature>
<feature type="binding site" evidence="2">
    <location>
        <begin position="79"/>
        <end position="80"/>
    </location>
    <ligand>
        <name>chitin</name>
        <dbReference type="ChEBI" id="CHEBI:17029"/>
    </ligand>
</feature>
<feature type="binding site" evidence="2">
    <location>
        <begin position="106"/>
        <end position="109"/>
    </location>
    <ligand>
        <name>chitin</name>
        <dbReference type="ChEBI" id="CHEBI:17029"/>
    </ligand>
</feature>
<feature type="binding site" evidence="2">
    <location>
        <position position="150"/>
    </location>
    <ligand>
        <name>chitin</name>
        <dbReference type="ChEBI" id="CHEBI:17029"/>
    </ligand>
</feature>
<feature type="binding site" evidence="2">
    <location>
        <begin position="213"/>
        <end position="216"/>
    </location>
    <ligand>
        <name>chitin</name>
        <dbReference type="ChEBI" id="CHEBI:17029"/>
    </ligand>
</feature>
<feature type="binding site" evidence="2">
    <location>
        <position position="361"/>
    </location>
    <ligand>
        <name>chitin</name>
        <dbReference type="ChEBI" id="CHEBI:17029"/>
    </ligand>
</feature>
<feature type="glycosylation site" description="N-linked (GlcNAc...) asparagine" evidence="1">
    <location>
        <position position="68"/>
    </location>
</feature>
<feature type="disulfide bond" evidence="2">
    <location>
        <begin position="34"/>
        <end position="59"/>
    </location>
</feature>
<feature type="disulfide bond" evidence="1">
    <location>
        <begin position="309"/>
        <end position="372"/>
    </location>
</feature>
<feature type="splice variant" id="VSP_054523" description="In isoform 3." evidence="12">
    <original>MHTSTEARMGMRAALT</original>
    <variation>MTLQLA</variation>
    <location>
        <begin position="1"/>
        <end position="16"/>
    </location>
</feature>
<feature type="splice variant" id="VSP_054524" description="In isoform 2." evidence="10 11">
    <location>
        <begin position="1"/>
        <end position="8"/>
    </location>
</feature>
<feature type="mutagenesis site" description="No effect on chiting-binding. No restoration of chitinase activity." evidence="4">
    <original>L</original>
    <variation>E</variation>
    <location>
        <position position="136"/>
    </location>
</feature>
<feature type="sequence conflict" description="In Ref. 4; ABY53363." evidence="12" ref="4">
    <original>E</original>
    <variation>G</variation>
    <location>
        <position position="112"/>
    </location>
</feature>
<feature type="sequence conflict" description="In Ref. 3; BAE33251." evidence="12" ref="3">
    <original>A</original>
    <variation>V</variation>
    <location>
        <position position="258"/>
    </location>
</feature>
<feature type="sequence conflict" description="In Ref. 1; CAA63603." evidence="12" ref="1">
    <original>D</original>
    <variation>H</variation>
    <location>
        <position position="339"/>
    </location>
</feature>
<feature type="sequence conflict" description="In Ref. 4; ABY53363." evidence="12" ref="4">
    <original>G</original>
    <variation>R</variation>
    <location>
        <position position="348"/>
    </location>
</feature>
<feature type="strand" evidence="13">
    <location>
        <begin position="31"/>
        <end position="38"/>
    </location>
</feature>
<feature type="helix" evidence="13">
    <location>
        <begin position="39"/>
        <end position="42"/>
    </location>
</feature>
<feature type="helix" evidence="13">
    <location>
        <begin position="45"/>
        <end position="47"/>
    </location>
</feature>
<feature type="helix" evidence="13">
    <location>
        <begin position="51"/>
        <end position="53"/>
    </location>
</feature>
<feature type="strand" evidence="13">
    <location>
        <begin position="60"/>
        <end position="69"/>
    </location>
</feature>
<feature type="helix" evidence="13">
    <location>
        <begin position="82"/>
        <end position="90"/>
    </location>
</feature>
<feature type="helix" evidence="13">
    <location>
        <begin position="91"/>
        <end position="94"/>
    </location>
</feature>
<feature type="strand" evidence="13">
    <location>
        <begin position="100"/>
        <end position="106"/>
    </location>
</feature>
<feature type="turn" evidence="13">
    <location>
        <begin position="108"/>
        <end position="110"/>
    </location>
</feature>
<feature type="helix" evidence="13">
    <location>
        <begin position="112"/>
        <end position="119"/>
    </location>
</feature>
<feature type="helix" evidence="13">
    <location>
        <begin position="122"/>
        <end position="139"/>
    </location>
</feature>
<feature type="strand" evidence="13">
    <location>
        <begin position="143"/>
        <end position="147"/>
    </location>
</feature>
<feature type="helix" evidence="13">
    <location>
        <begin position="153"/>
        <end position="155"/>
    </location>
</feature>
<feature type="helix" evidence="13">
    <location>
        <begin position="156"/>
        <end position="173"/>
    </location>
</feature>
<feature type="strand" evidence="13">
    <location>
        <begin position="182"/>
        <end position="188"/>
    </location>
</feature>
<feature type="helix" evidence="13">
    <location>
        <begin position="191"/>
        <end position="197"/>
    </location>
</feature>
<feature type="helix" evidence="13">
    <location>
        <begin position="200"/>
        <end position="204"/>
    </location>
</feature>
<feature type="strand" evidence="13">
    <location>
        <begin position="208"/>
        <end position="213"/>
    </location>
</feature>
<feature type="helix" evidence="13">
    <location>
        <begin position="220"/>
        <end position="222"/>
    </location>
</feature>
<feature type="strand" evidence="13">
    <location>
        <begin position="242"/>
        <end position="245"/>
    </location>
</feature>
<feature type="helix" evidence="13">
    <location>
        <begin position="246"/>
        <end position="255"/>
    </location>
</feature>
<feature type="helix" evidence="13">
    <location>
        <begin position="260"/>
        <end position="262"/>
    </location>
</feature>
<feature type="strand" evidence="13">
    <location>
        <begin position="263"/>
        <end position="279"/>
    </location>
</feature>
<feature type="strand" evidence="13">
    <location>
        <begin position="286"/>
        <end position="290"/>
    </location>
</feature>
<feature type="turn" evidence="13">
    <location>
        <begin position="295"/>
        <end position="297"/>
    </location>
</feature>
<feature type="helix" evidence="13">
    <location>
        <begin position="305"/>
        <end position="312"/>
    </location>
</feature>
<feature type="strand" evidence="13">
    <location>
        <begin position="316"/>
        <end position="319"/>
    </location>
</feature>
<feature type="turn" evidence="13">
    <location>
        <begin position="321"/>
        <end position="323"/>
    </location>
</feature>
<feature type="strand" evidence="13">
    <location>
        <begin position="326"/>
        <end position="330"/>
    </location>
</feature>
<feature type="strand" evidence="13">
    <location>
        <begin position="333"/>
        <end position="336"/>
    </location>
</feature>
<feature type="helix" evidence="13">
    <location>
        <begin position="340"/>
        <end position="352"/>
    </location>
</feature>
<feature type="strand" evidence="13">
    <location>
        <begin position="356"/>
        <end position="361"/>
    </location>
</feature>
<feature type="helix" evidence="13">
    <location>
        <begin position="363"/>
        <end position="365"/>
    </location>
</feature>
<feature type="helix" evidence="13">
    <location>
        <begin position="379"/>
        <end position="388"/>
    </location>
</feature>
<sequence length="389" mass="43893">MHTSTEARMGMRAALTGFAVLMLLQSCSAYKLVCYFTSWSQYREGVGSFLPDAIQPFLCTHIIYSFANISSDNMLSTWEWNDESNYDKLNKLKTRNTNLKTLLSVGGWKFGEKRFSEIASNTERRTAFVRSVAPFLRSYGFDGLDLAWLYPRLRDKQYFSTLIKELNAEFTKEVQPGREKLLLSAALSAGKVAIDTGYDIAQIAQHLDFINLMTYDFHGVWRQITGHHSPLFQGQKDTRFDRYSNVNYAVQYMIRLGAQASKLLMGIPTFGKSFTLASSENQLGAPISGEGLPGRFTKEAGTLAYYEICDFLKGAEVHRLSNEKVPFATKGNQWVGYEDKESVKNKVGFLKEKKLAGAMVWALDLDDFQGTCQPKEFFPLTNAIKDALA</sequence>
<name>CH3L1_MOUSE</name>
<accession>Q61362</accession>
<accession>B0FEU7</accession>
<accession>D3Z2P2</accession>
<accession>Q3U291</accession>
<accession>Q4FJW9</accession>
<accession>Q8BKL8</accession>
<accession>Q99J84</accession>
<dbReference type="EMBL" id="X93035">
    <property type="protein sequence ID" value="CAA63603.1"/>
    <property type="status" value="ALT_INIT"/>
    <property type="molecule type" value="mRNA"/>
</dbReference>
<dbReference type="EMBL" id="EU313768">
    <property type="protein sequence ID" value="ABY53363.1"/>
    <property type="molecule type" value="mRNA"/>
</dbReference>
<dbReference type="EMBL" id="AK051475">
    <property type="protein sequence ID" value="BAC34654.1"/>
    <property type="molecule type" value="mRNA"/>
</dbReference>
<dbReference type="EMBL" id="AK155412">
    <property type="protein sequence ID" value="BAE33251.1"/>
    <property type="molecule type" value="mRNA"/>
</dbReference>
<dbReference type="EMBL" id="CT010283">
    <property type="protein sequence ID" value="CAJ18491.1"/>
    <property type="molecule type" value="mRNA"/>
</dbReference>
<dbReference type="EMBL" id="AC137104">
    <property type="status" value="NOT_ANNOTATED_CDS"/>
    <property type="molecule type" value="Genomic_DNA"/>
</dbReference>
<dbReference type="EMBL" id="BC003780">
    <property type="protein sequence ID" value="AAH03780.1"/>
    <property type="status" value="ALT_INIT"/>
    <property type="molecule type" value="mRNA"/>
</dbReference>
<dbReference type="EMBL" id="BC004734">
    <property type="protein sequence ID" value="AAH04734.1"/>
    <property type="status" value="ALT_INIT"/>
    <property type="molecule type" value="mRNA"/>
</dbReference>
<dbReference type="EMBL" id="BC005611">
    <property type="protein sequence ID" value="AAH05611.1"/>
    <property type="status" value="ALT_INIT"/>
    <property type="molecule type" value="mRNA"/>
</dbReference>
<dbReference type="CCDS" id="CCDS48368.1">
    <molecule id="Q61362-1"/>
</dbReference>
<dbReference type="CCDS" id="CCDS87878.1">
    <molecule id="Q61362-3"/>
</dbReference>
<dbReference type="PIR" id="S61551">
    <property type="entry name" value="S61551"/>
</dbReference>
<dbReference type="RefSeq" id="NP_001361555.1">
    <molecule id="Q61362-3"/>
    <property type="nucleotide sequence ID" value="NM_001374626.1"/>
</dbReference>
<dbReference type="RefSeq" id="NP_031721.2">
    <molecule id="Q61362-1"/>
    <property type="nucleotide sequence ID" value="NM_007695.4"/>
</dbReference>
<dbReference type="RefSeq" id="XP_006529174.1">
    <property type="nucleotide sequence ID" value="XM_006529111.3"/>
</dbReference>
<dbReference type="PDB" id="5XEP">
    <property type="method" value="X-ray"/>
    <property type="resolution" value="2.60 A"/>
    <property type="chains" value="A/B/C/D/E/F=9-389"/>
</dbReference>
<dbReference type="PDBsum" id="5XEP"/>
<dbReference type="SMR" id="Q61362"/>
<dbReference type="BioGRID" id="198698">
    <property type="interactions" value="1"/>
</dbReference>
<dbReference type="CORUM" id="Q61362"/>
<dbReference type="FunCoup" id="Q61362">
    <property type="interactions" value="59"/>
</dbReference>
<dbReference type="IntAct" id="Q61362">
    <property type="interactions" value="3"/>
</dbReference>
<dbReference type="STRING" id="10090.ENSMUSP00000080717"/>
<dbReference type="CAZy" id="GH18">
    <property type="family name" value="Glycoside Hydrolase Family 18"/>
</dbReference>
<dbReference type="GlyCosmos" id="Q61362">
    <property type="glycosylation" value="1 site, No reported glycans"/>
</dbReference>
<dbReference type="GlyGen" id="Q61362">
    <property type="glycosylation" value="1 site"/>
</dbReference>
<dbReference type="PhosphoSitePlus" id="Q61362"/>
<dbReference type="jPOST" id="Q61362"/>
<dbReference type="PaxDb" id="10090-ENSMUSP00000080717"/>
<dbReference type="PeptideAtlas" id="Q61362"/>
<dbReference type="ProteomicsDB" id="281204">
    <molecule id="Q61362-1"/>
</dbReference>
<dbReference type="ProteomicsDB" id="281205">
    <molecule id="Q61362-2"/>
</dbReference>
<dbReference type="ProteomicsDB" id="281206">
    <molecule id="Q61362-3"/>
</dbReference>
<dbReference type="ABCD" id="Q61362">
    <property type="antibodies" value="3 sequenced antibodies"/>
</dbReference>
<dbReference type="Antibodypedia" id="34542">
    <property type="antibodies" value="470 antibodies from 39 providers"/>
</dbReference>
<dbReference type="DNASU" id="12654"/>
<dbReference type="Ensembl" id="ENSMUST00000082060.10">
    <molecule id="Q61362-1"/>
    <property type="protein sequence ID" value="ENSMUSP00000080717.4"/>
    <property type="gene ID" value="ENSMUSG00000064246.11"/>
</dbReference>
<dbReference type="Ensembl" id="ENSMUST00000153856.8">
    <molecule id="Q61362-2"/>
    <property type="protein sequence ID" value="ENSMUSP00000117117.2"/>
    <property type="gene ID" value="ENSMUSG00000064246.11"/>
</dbReference>
<dbReference type="Ensembl" id="ENSMUST00000156873.8">
    <molecule id="Q61362-3"/>
    <property type="protein sequence ID" value="ENSMUSP00000119205.2"/>
    <property type="gene ID" value="ENSMUSG00000064246.11"/>
</dbReference>
<dbReference type="GeneID" id="12654"/>
<dbReference type="KEGG" id="mmu:12654"/>
<dbReference type="UCSC" id="uc007crg.2">
    <molecule id="Q61362-1"/>
    <property type="organism name" value="mouse"/>
</dbReference>
<dbReference type="AGR" id="MGI:1340899"/>
<dbReference type="CTD" id="1116"/>
<dbReference type="MGI" id="MGI:1340899">
    <property type="gene designation" value="Chi3l1"/>
</dbReference>
<dbReference type="VEuPathDB" id="HostDB:ENSMUSG00000064246"/>
<dbReference type="eggNOG" id="KOG2806">
    <property type="taxonomic scope" value="Eukaryota"/>
</dbReference>
<dbReference type="GeneTree" id="ENSGT00940000161815"/>
<dbReference type="HOGENOM" id="CLU_002833_3_1_1"/>
<dbReference type="InParanoid" id="Q61362"/>
<dbReference type="OMA" id="KSCQRGV"/>
<dbReference type="OrthoDB" id="76388at2759"/>
<dbReference type="PhylomeDB" id="Q61362"/>
<dbReference type="TreeFam" id="TF315610"/>
<dbReference type="Reactome" id="R-MMU-6798695">
    <property type="pathway name" value="Neutrophil degranulation"/>
</dbReference>
<dbReference type="BioGRID-ORCS" id="12654">
    <property type="hits" value="2 hits in 79 CRISPR screens"/>
</dbReference>
<dbReference type="ChiTaRS" id="Chil1">
    <property type="organism name" value="mouse"/>
</dbReference>
<dbReference type="PRO" id="PR:Q61362"/>
<dbReference type="Proteomes" id="UP000000589">
    <property type="component" value="Chromosome 1"/>
</dbReference>
<dbReference type="RNAct" id="Q61362">
    <property type="molecule type" value="protein"/>
</dbReference>
<dbReference type="Bgee" id="ENSMUSG00000064246">
    <property type="expression patterns" value="Expressed in granulocyte and 117 other cell types or tissues"/>
</dbReference>
<dbReference type="ExpressionAtlas" id="Q61362">
    <property type="expression patterns" value="baseline and differential"/>
</dbReference>
<dbReference type="GO" id="GO:0005737">
    <property type="term" value="C:cytoplasm"/>
    <property type="evidence" value="ECO:0000314"/>
    <property type="project" value="UniProtKB"/>
</dbReference>
<dbReference type="GO" id="GO:0005783">
    <property type="term" value="C:endoplasmic reticulum"/>
    <property type="evidence" value="ECO:0000314"/>
    <property type="project" value="UniProtKB"/>
</dbReference>
<dbReference type="GO" id="GO:0005615">
    <property type="term" value="C:extracellular space"/>
    <property type="evidence" value="ECO:0000250"/>
    <property type="project" value="UniProtKB"/>
</dbReference>
<dbReference type="GO" id="GO:0008061">
    <property type="term" value="F:chitin binding"/>
    <property type="evidence" value="ECO:0000250"/>
    <property type="project" value="UniProtKB"/>
</dbReference>
<dbReference type="GO" id="GO:0007250">
    <property type="term" value="P:activation of NF-kappaB-inducing kinase activity"/>
    <property type="evidence" value="ECO:0000314"/>
    <property type="project" value="UniProtKB"/>
</dbReference>
<dbReference type="GO" id="GO:0006915">
    <property type="term" value="P:apoptotic process"/>
    <property type="evidence" value="ECO:0007669"/>
    <property type="project" value="UniProtKB-KW"/>
</dbReference>
<dbReference type="GO" id="GO:0005975">
    <property type="term" value="P:carbohydrate metabolic process"/>
    <property type="evidence" value="ECO:0007669"/>
    <property type="project" value="InterPro"/>
</dbReference>
<dbReference type="GO" id="GO:0071356">
    <property type="term" value="P:cellular response to tumor necrosis factor"/>
    <property type="evidence" value="ECO:0000250"/>
    <property type="project" value="UniProtKB"/>
</dbReference>
<dbReference type="GO" id="GO:0006954">
    <property type="term" value="P:inflammatory response"/>
    <property type="evidence" value="ECO:0000250"/>
    <property type="project" value="UniProtKB"/>
</dbReference>
<dbReference type="GO" id="GO:0030324">
    <property type="term" value="P:lung development"/>
    <property type="evidence" value="ECO:0000250"/>
    <property type="project" value="UniProtKB"/>
</dbReference>
<dbReference type="GO" id="GO:0045766">
    <property type="term" value="P:positive regulation of angiogenesis"/>
    <property type="evidence" value="ECO:0000250"/>
    <property type="project" value="UniProtKB"/>
</dbReference>
<dbReference type="GO" id="GO:0070374">
    <property type="term" value="P:positive regulation of ERK1 and ERK2 cascade"/>
    <property type="evidence" value="ECO:0000250"/>
    <property type="project" value="UniProtKB"/>
</dbReference>
<dbReference type="GO" id="GO:0032757">
    <property type="term" value="P:positive regulation of interleukin-8 production"/>
    <property type="evidence" value="ECO:0000314"/>
    <property type="project" value="UniProtKB"/>
</dbReference>
<dbReference type="GO" id="GO:0010800">
    <property type="term" value="P:positive regulation of peptidyl-threonine phosphorylation"/>
    <property type="evidence" value="ECO:0000314"/>
    <property type="project" value="UniProtKB"/>
</dbReference>
<dbReference type="GO" id="GO:0051897">
    <property type="term" value="P:positive regulation of phosphatidylinositol 3-kinase/protein kinase B signal transduction"/>
    <property type="evidence" value="ECO:0000314"/>
    <property type="project" value="UniProtKB"/>
</dbReference>
<dbReference type="GO" id="GO:0070555">
    <property type="term" value="P:response to interleukin-1"/>
    <property type="evidence" value="ECO:0000250"/>
    <property type="project" value="UniProtKB"/>
</dbReference>
<dbReference type="GO" id="GO:0070741">
    <property type="term" value="P:response to interleukin-6"/>
    <property type="evidence" value="ECO:0000250"/>
    <property type="project" value="UniProtKB"/>
</dbReference>
<dbReference type="GO" id="GO:0009612">
    <property type="term" value="P:response to mechanical stimulus"/>
    <property type="evidence" value="ECO:0000250"/>
    <property type="project" value="UniProtKB"/>
</dbReference>
<dbReference type="GO" id="GO:0034612">
    <property type="term" value="P:response to tumor necrosis factor"/>
    <property type="evidence" value="ECO:0000250"/>
    <property type="project" value="UniProtKB"/>
</dbReference>
<dbReference type="CDD" id="cd02872">
    <property type="entry name" value="GH18_chitolectin_chitotriosidase"/>
    <property type="match status" value="1"/>
</dbReference>
<dbReference type="FunFam" id="3.10.50.10:FF:000001">
    <property type="entry name" value="Chitinase 3-like 1"/>
    <property type="match status" value="1"/>
</dbReference>
<dbReference type="FunFam" id="3.20.20.80:FF:000047">
    <property type="entry name" value="Chitinase-3-like protein 1"/>
    <property type="match status" value="1"/>
</dbReference>
<dbReference type="Gene3D" id="3.10.50.10">
    <property type="match status" value="1"/>
</dbReference>
<dbReference type="Gene3D" id="3.20.20.80">
    <property type="entry name" value="Glycosidases"/>
    <property type="match status" value="1"/>
</dbReference>
<dbReference type="InterPro" id="IPR011583">
    <property type="entry name" value="Chitinase_II/V-like_cat"/>
</dbReference>
<dbReference type="InterPro" id="IPR029070">
    <property type="entry name" value="Chitinase_insertion_sf"/>
</dbReference>
<dbReference type="InterPro" id="IPR001223">
    <property type="entry name" value="Glyco_hydro18_cat"/>
</dbReference>
<dbReference type="InterPro" id="IPR017853">
    <property type="entry name" value="Glycoside_hydrolase_SF"/>
</dbReference>
<dbReference type="InterPro" id="IPR050314">
    <property type="entry name" value="Glycosyl_Hydrlase_18"/>
</dbReference>
<dbReference type="PANTHER" id="PTHR11177">
    <property type="entry name" value="CHITINASE"/>
    <property type="match status" value="1"/>
</dbReference>
<dbReference type="PANTHER" id="PTHR11177:SF202">
    <property type="entry name" value="CHITINASE-3-LIKE PROTEIN 1"/>
    <property type="match status" value="1"/>
</dbReference>
<dbReference type="Pfam" id="PF00704">
    <property type="entry name" value="Glyco_hydro_18"/>
    <property type="match status" value="1"/>
</dbReference>
<dbReference type="SMART" id="SM00636">
    <property type="entry name" value="Glyco_18"/>
    <property type="match status" value="1"/>
</dbReference>
<dbReference type="SUPFAM" id="SSF51445">
    <property type="entry name" value="(Trans)glycosidases"/>
    <property type="match status" value="1"/>
</dbReference>
<dbReference type="SUPFAM" id="SSF54556">
    <property type="entry name" value="Chitinase insertion domain"/>
    <property type="match status" value="1"/>
</dbReference>
<dbReference type="PROSITE" id="PS51910">
    <property type="entry name" value="GH18_2"/>
    <property type="match status" value="1"/>
</dbReference>
<protein>
    <recommendedName>
        <fullName>Chitinase-3-like protein 1</fullName>
    </recommendedName>
    <alternativeName>
        <fullName>BRP39 protein</fullName>
    </alternativeName>
    <alternativeName>
        <fullName>Breast regression protein 39</fullName>
    </alternativeName>
    <alternativeName>
        <fullName>Cartilage glycoprotein 39</fullName>
        <shortName>CGP-39</shortName>
        <shortName>GP-39</shortName>
    </alternativeName>
</protein>
<evidence type="ECO:0000250" key="1"/>
<evidence type="ECO:0000255" key="2">
    <source>
        <dbReference type="PROSITE-ProRule" id="PRU01258"/>
    </source>
</evidence>
<evidence type="ECO:0000269" key="3">
    <source>
    </source>
</evidence>
<evidence type="ECO:0000269" key="4">
    <source>
    </source>
</evidence>
<evidence type="ECO:0000269" key="5">
    <source>
    </source>
</evidence>
<evidence type="ECO:0000269" key="6">
    <source>
    </source>
</evidence>
<evidence type="ECO:0000269" key="7">
    <source>
    </source>
</evidence>
<evidence type="ECO:0000269" key="8">
    <source>
    </source>
</evidence>
<evidence type="ECO:0000269" key="9">
    <source>
    </source>
</evidence>
<evidence type="ECO:0000303" key="10">
    <source>
    </source>
</evidence>
<evidence type="ECO:0000303" key="11">
    <source ref="4"/>
</evidence>
<evidence type="ECO:0000305" key="12"/>
<evidence type="ECO:0007829" key="13">
    <source>
        <dbReference type="PDB" id="5XEP"/>
    </source>
</evidence>
<organism>
    <name type="scientific">Mus musculus</name>
    <name type="common">Mouse</name>
    <dbReference type="NCBI Taxonomy" id="10090"/>
    <lineage>
        <taxon>Eukaryota</taxon>
        <taxon>Metazoa</taxon>
        <taxon>Chordata</taxon>
        <taxon>Craniata</taxon>
        <taxon>Vertebrata</taxon>
        <taxon>Euteleostomi</taxon>
        <taxon>Mammalia</taxon>
        <taxon>Eutheria</taxon>
        <taxon>Euarchontoglires</taxon>
        <taxon>Glires</taxon>
        <taxon>Rodentia</taxon>
        <taxon>Myomorpha</taxon>
        <taxon>Muroidea</taxon>
        <taxon>Muridae</taxon>
        <taxon>Murinae</taxon>
        <taxon>Mus</taxon>
        <taxon>Mus</taxon>
    </lineage>
</organism>